<sequence>MTTSEVRVRFCPSPTGTPHVGLVRTALFNWAFARHNGGSFVFRIEDTDAARDSEESYQAILDALRWLGLNWDEGPEVGGPYEPYRQSQRRDLHLDVVAKLLAAGEAYESFSTPEEVEERHKAAGRDPKLGYDNFDRDLTPDQRQAFLDEGRKPVVRLRMPDHDLTWDDLVRGETTFKAGTVPDFALTRGNGIPLYTLVNPVDDALMKITHVLRGEDLLSSTPRQLALYEAMQRIGVADFTPRFGHLPFVMGQGNKKLSKRDPESNLFIHRDRGFVPEGLLNYLALLGWGISDDHDVFSLDEMVAAFDISKVNSNPARFDQKKADAINAEHIRLLEPADFAARLRAFLTLHGHLGETVDESVFATAAELVQTRIVVLSDAWDLLKFLFVDEADFAIDPAAAAKNLGADSAPVLDAALASLDAVEAWDAASLEEALKTALVDELGLKPRKAFAPVRVAVTGSHISPPLYESMELLGRDVSLSRLRSARAGVAG</sequence>
<accession>Q0S2G8</accession>
<feature type="chain" id="PRO_0000330993" description="Glutamate--tRNA ligase">
    <location>
        <begin position="1"/>
        <end position="491"/>
    </location>
</feature>
<feature type="region of interest" description="Disordered" evidence="2">
    <location>
        <begin position="111"/>
        <end position="134"/>
    </location>
</feature>
<feature type="short sequence motif" description="'HIGH' region" evidence="1">
    <location>
        <begin position="12"/>
        <end position="22"/>
    </location>
</feature>
<feature type="short sequence motif" description="'KMSKS' region" evidence="1">
    <location>
        <begin position="256"/>
        <end position="260"/>
    </location>
</feature>
<feature type="compositionally biased region" description="Basic and acidic residues" evidence="2">
    <location>
        <begin position="117"/>
        <end position="134"/>
    </location>
</feature>
<feature type="binding site" evidence="1">
    <location>
        <position position="259"/>
    </location>
    <ligand>
        <name>ATP</name>
        <dbReference type="ChEBI" id="CHEBI:30616"/>
    </ligand>
</feature>
<protein>
    <recommendedName>
        <fullName evidence="1">Glutamate--tRNA ligase</fullName>
        <ecNumber evidence="1">6.1.1.17</ecNumber>
    </recommendedName>
    <alternativeName>
        <fullName evidence="1">Glutamyl-tRNA synthetase</fullName>
        <shortName evidence="1">GluRS</shortName>
    </alternativeName>
</protein>
<evidence type="ECO:0000255" key="1">
    <source>
        <dbReference type="HAMAP-Rule" id="MF_00022"/>
    </source>
</evidence>
<evidence type="ECO:0000256" key="2">
    <source>
        <dbReference type="SAM" id="MobiDB-lite"/>
    </source>
</evidence>
<proteinExistence type="inferred from homology"/>
<name>SYE_RHOJR</name>
<gene>
    <name evidence="1" type="primary">gltX</name>
    <name type="ordered locus">RHA1_ro06493</name>
</gene>
<keyword id="KW-0030">Aminoacyl-tRNA synthetase</keyword>
<keyword id="KW-0067">ATP-binding</keyword>
<keyword id="KW-0963">Cytoplasm</keyword>
<keyword id="KW-0436">Ligase</keyword>
<keyword id="KW-0547">Nucleotide-binding</keyword>
<keyword id="KW-0648">Protein biosynthesis</keyword>
<organism>
    <name type="scientific">Rhodococcus jostii (strain RHA1)</name>
    <dbReference type="NCBI Taxonomy" id="101510"/>
    <lineage>
        <taxon>Bacteria</taxon>
        <taxon>Bacillati</taxon>
        <taxon>Actinomycetota</taxon>
        <taxon>Actinomycetes</taxon>
        <taxon>Mycobacteriales</taxon>
        <taxon>Nocardiaceae</taxon>
        <taxon>Rhodococcus</taxon>
    </lineage>
</organism>
<dbReference type="EC" id="6.1.1.17" evidence="1"/>
<dbReference type="EMBL" id="CP000431">
    <property type="protein sequence ID" value="ABG98268.1"/>
    <property type="molecule type" value="Genomic_DNA"/>
</dbReference>
<dbReference type="RefSeq" id="WP_011598377.1">
    <property type="nucleotide sequence ID" value="NC_008268.1"/>
</dbReference>
<dbReference type="SMR" id="Q0S2G8"/>
<dbReference type="KEGG" id="rha:RHA1_ro06493"/>
<dbReference type="PATRIC" id="fig|101510.16.peg.6548"/>
<dbReference type="eggNOG" id="COG0008">
    <property type="taxonomic scope" value="Bacteria"/>
</dbReference>
<dbReference type="HOGENOM" id="CLU_015768_6_1_11"/>
<dbReference type="OrthoDB" id="9807503at2"/>
<dbReference type="Proteomes" id="UP000008710">
    <property type="component" value="Chromosome"/>
</dbReference>
<dbReference type="GO" id="GO:0005829">
    <property type="term" value="C:cytosol"/>
    <property type="evidence" value="ECO:0007669"/>
    <property type="project" value="TreeGrafter"/>
</dbReference>
<dbReference type="GO" id="GO:0005524">
    <property type="term" value="F:ATP binding"/>
    <property type="evidence" value="ECO:0007669"/>
    <property type="project" value="UniProtKB-UniRule"/>
</dbReference>
<dbReference type="GO" id="GO:0004818">
    <property type="term" value="F:glutamate-tRNA ligase activity"/>
    <property type="evidence" value="ECO:0007669"/>
    <property type="project" value="UniProtKB-UniRule"/>
</dbReference>
<dbReference type="GO" id="GO:0000049">
    <property type="term" value="F:tRNA binding"/>
    <property type="evidence" value="ECO:0007669"/>
    <property type="project" value="InterPro"/>
</dbReference>
<dbReference type="GO" id="GO:0008270">
    <property type="term" value="F:zinc ion binding"/>
    <property type="evidence" value="ECO:0007669"/>
    <property type="project" value="InterPro"/>
</dbReference>
<dbReference type="GO" id="GO:0006424">
    <property type="term" value="P:glutamyl-tRNA aminoacylation"/>
    <property type="evidence" value="ECO:0007669"/>
    <property type="project" value="UniProtKB-UniRule"/>
</dbReference>
<dbReference type="CDD" id="cd00808">
    <property type="entry name" value="GluRS_core"/>
    <property type="match status" value="1"/>
</dbReference>
<dbReference type="FunFam" id="3.40.50.620:FF:000149">
    <property type="entry name" value="Glutamate--tRNA ligase"/>
    <property type="match status" value="1"/>
</dbReference>
<dbReference type="Gene3D" id="1.10.10.350">
    <property type="match status" value="1"/>
</dbReference>
<dbReference type="Gene3D" id="1.10.8.70">
    <property type="entry name" value="Glutamate-tRNA synthetase, class I, anticodon-binding domain 1"/>
    <property type="match status" value="1"/>
</dbReference>
<dbReference type="Gene3D" id="1.10.1160.10">
    <property type="entry name" value="Glutamyl-trna Synthetase, Domain 2"/>
    <property type="match status" value="1"/>
</dbReference>
<dbReference type="Gene3D" id="3.90.800.10">
    <property type="entry name" value="Glutamyl-tRNA Synthetase, Domain 3"/>
    <property type="match status" value="1"/>
</dbReference>
<dbReference type="Gene3D" id="3.40.50.620">
    <property type="entry name" value="HUPs"/>
    <property type="match status" value="1"/>
</dbReference>
<dbReference type="HAMAP" id="MF_00022">
    <property type="entry name" value="Glu_tRNA_synth_type1"/>
    <property type="match status" value="1"/>
</dbReference>
<dbReference type="InterPro" id="IPR045462">
    <property type="entry name" value="aa-tRNA-synth_I_cd-bd"/>
</dbReference>
<dbReference type="InterPro" id="IPR020751">
    <property type="entry name" value="aa-tRNA-synth_I_codon-bd_sub2"/>
</dbReference>
<dbReference type="InterPro" id="IPR008925">
    <property type="entry name" value="aa_tRNA-synth_I_cd-bd_sf"/>
</dbReference>
<dbReference type="InterPro" id="IPR004527">
    <property type="entry name" value="Glu-tRNA-ligase_bac/mito"/>
</dbReference>
<dbReference type="InterPro" id="IPR020752">
    <property type="entry name" value="Glu-tRNA-synth_I_codon-bd_sub1"/>
</dbReference>
<dbReference type="InterPro" id="IPR000924">
    <property type="entry name" value="Glu/Gln-tRNA-synth"/>
</dbReference>
<dbReference type="InterPro" id="IPR020058">
    <property type="entry name" value="Glu/Gln-tRNA-synth_Ib_cat-dom"/>
</dbReference>
<dbReference type="InterPro" id="IPR020061">
    <property type="entry name" value="Glu_tRNA_lig_a-bdl"/>
</dbReference>
<dbReference type="InterPro" id="IPR049940">
    <property type="entry name" value="GluQ/Sye"/>
</dbReference>
<dbReference type="InterPro" id="IPR033910">
    <property type="entry name" value="GluRS_core"/>
</dbReference>
<dbReference type="InterPro" id="IPR014729">
    <property type="entry name" value="Rossmann-like_a/b/a_fold"/>
</dbReference>
<dbReference type="NCBIfam" id="TIGR00464">
    <property type="entry name" value="gltX_bact"/>
    <property type="match status" value="1"/>
</dbReference>
<dbReference type="PANTHER" id="PTHR43311">
    <property type="entry name" value="GLUTAMATE--TRNA LIGASE"/>
    <property type="match status" value="1"/>
</dbReference>
<dbReference type="PANTHER" id="PTHR43311:SF2">
    <property type="entry name" value="GLUTAMATE--TRNA LIGASE, MITOCHONDRIAL-RELATED"/>
    <property type="match status" value="1"/>
</dbReference>
<dbReference type="Pfam" id="PF19269">
    <property type="entry name" value="Anticodon_2"/>
    <property type="match status" value="1"/>
</dbReference>
<dbReference type="Pfam" id="PF00749">
    <property type="entry name" value="tRNA-synt_1c"/>
    <property type="match status" value="1"/>
</dbReference>
<dbReference type="PRINTS" id="PR00987">
    <property type="entry name" value="TRNASYNTHGLU"/>
</dbReference>
<dbReference type="SUPFAM" id="SSF48163">
    <property type="entry name" value="An anticodon-binding domain of class I aminoacyl-tRNA synthetases"/>
    <property type="match status" value="1"/>
</dbReference>
<dbReference type="SUPFAM" id="SSF52374">
    <property type="entry name" value="Nucleotidylyl transferase"/>
    <property type="match status" value="1"/>
</dbReference>
<reference key="1">
    <citation type="journal article" date="2006" name="Proc. Natl. Acad. Sci. U.S.A.">
        <title>The complete genome of Rhodococcus sp. RHA1 provides insights into a catabolic powerhouse.</title>
        <authorList>
            <person name="McLeod M.P."/>
            <person name="Warren R.L."/>
            <person name="Hsiao W.W.L."/>
            <person name="Araki N."/>
            <person name="Myhre M."/>
            <person name="Fernandes C."/>
            <person name="Miyazawa D."/>
            <person name="Wong W."/>
            <person name="Lillquist A.L."/>
            <person name="Wang D."/>
            <person name="Dosanjh M."/>
            <person name="Hara H."/>
            <person name="Petrescu A."/>
            <person name="Morin R.D."/>
            <person name="Yang G."/>
            <person name="Stott J.M."/>
            <person name="Schein J.E."/>
            <person name="Shin H."/>
            <person name="Smailus D."/>
            <person name="Siddiqui A.S."/>
            <person name="Marra M.A."/>
            <person name="Jones S.J.M."/>
            <person name="Holt R."/>
            <person name="Brinkman F.S.L."/>
            <person name="Miyauchi K."/>
            <person name="Fukuda M."/>
            <person name="Davies J.E."/>
            <person name="Mohn W.W."/>
            <person name="Eltis L.D."/>
        </authorList>
    </citation>
    <scope>NUCLEOTIDE SEQUENCE [LARGE SCALE GENOMIC DNA]</scope>
    <source>
        <strain>RHA1</strain>
    </source>
</reference>
<comment type="function">
    <text evidence="1">Catalyzes the attachment of glutamate to tRNA(Glu) in a two-step reaction: glutamate is first activated by ATP to form Glu-AMP and then transferred to the acceptor end of tRNA(Glu).</text>
</comment>
<comment type="catalytic activity">
    <reaction evidence="1">
        <text>tRNA(Glu) + L-glutamate + ATP = L-glutamyl-tRNA(Glu) + AMP + diphosphate</text>
        <dbReference type="Rhea" id="RHEA:23540"/>
        <dbReference type="Rhea" id="RHEA-COMP:9663"/>
        <dbReference type="Rhea" id="RHEA-COMP:9680"/>
        <dbReference type="ChEBI" id="CHEBI:29985"/>
        <dbReference type="ChEBI" id="CHEBI:30616"/>
        <dbReference type="ChEBI" id="CHEBI:33019"/>
        <dbReference type="ChEBI" id="CHEBI:78442"/>
        <dbReference type="ChEBI" id="CHEBI:78520"/>
        <dbReference type="ChEBI" id="CHEBI:456215"/>
        <dbReference type="EC" id="6.1.1.17"/>
    </reaction>
</comment>
<comment type="subunit">
    <text evidence="1">Monomer.</text>
</comment>
<comment type="subcellular location">
    <subcellularLocation>
        <location evidence="1">Cytoplasm</location>
    </subcellularLocation>
</comment>
<comment type="similarity">
    <text evidence="1">Belongs to the class-I aminoacyl-tRNA synthetase family. Glutamate--tRNA ligase type 1 subfamily.</text>
</comment>